<proteinExistence type="evidence at protein level"/>
<organism>
    <name type="scientific">Escherichia coli (strain K12)</name>
    <dbReference type="NCBI Taxonomy" id="83333"/>
    <lineage>
        <taxon>Bacteria</taxon>
        <taxon>Pseudomonadati</taxon>
        <taxon>Pseudomonadota</taxon>
        <taxon>Gammaproteobacteria</taxon>
        <taxon>Enterobacterales</taxon>
        <taxon>Enterobacteriaceae</taxon>
        <taxon>Escherichia</taxon>
    </lineage>
</organism>
<feature type="chain" id="PRO_0000201897" description="Endoribonuclease toxin MazF">
    <location>
        <begin position="1"/>
        <end position="111"/>
    </location>
</feature>
<feature type="region of interest" description="Loop 1, participates in catalytic activity" evidence="30">
    <location>
        <begin position="17"/>
        <end position="28"/>
    </location>
</feature>
<feature type="region of interest" description="Loop 2, involved in substrate recognition" evidence="30">
    <location>
        <begin position="53"/>
        <end position="61"/>
    </location>
</feature>
<feature type="modified residue" description="ADP-ribosylarginine" evidence="25">
    <location>
        <position position="4"/>
    </location>
</feature>
<feature type="mutagenesis site" description="Changes loop 1 to poly-G; loss of endoribonuclease activity." evidence="20">
    <original>FDPTKGSEQAGH</original>
    <variation>GGGGGGGGGGG</variation>
    <location>
        <begin position="17"/>
        <end position="28"/>
    </location>
</feature>
<feature type="mutagenesis site" description="Changes loop 1 to MazF6 M.tuberculosis sequence; loss of endoribonuclease activity." evidence="20">
    <original>FDPTKGSEQAGH</original>
    <variation>LGPPSGSQPAKR</variation>
    <location>
        <begin position="17"/>
        <end position="28"/>
    </location>
</feature>
<feature type="mutagenesis site" description="Changes loop 1 to MazF M.xanthus sequence; loss of endoribonuclease activity." evidence="20">
    <original>FDPTKGSEQAGH</original>
    <variation>PDDSRGPVPSYS</variation>
    <location>
        <begin position="17"/>
        <end position="28"/>
    </location>
</feature>
<feature type="mutagenesis site" description="Greatly reduces toxicity, about 10-fold less RNA cleavage activity. Expression in the presence of wt MazF has a dominant-negative phenotype, causing cell death as it titrates out the MazE antitoxin; still activates operon transcription." evidence="10 23">
    <original>E</original>
    <variation>A</variation>
    <location>
        <position position="24"/>
    </location>
</feature>
<feature type="mutagenesis site" description="No changes in toxicity." evidence="23">
    <original>H</original>
    <variation>A</variation>
    <location>
        <position position="28"/>
    </location>
</feature>
<feature type="mutagenesis site" description="Changes loop 2 to poly-G; reduces endoribonuclease activity, alters cleavage sites." evidence="20">
    <original>TQSKGYPFE</original>
    <variation>GGGGGGGG</variation>
    <variation>GGGGGGGGGGG</variation>
    <location>
        <begin position="53"/>
        <end position="61"/>
    </location>
</feature>
<feature type="mutagenesis site" description="Changes loop 2 to MazF M.xanthus sequence; reduces endoribonuclease activity, alters cleavage sites." evidence="20">
    <original>TQSKGYPFE</original>
    <variation>SNLHRASEPGN</variation>
    <location>
        <begin position="53"/>
        <end position="61"/>
    </location>
</feature>
<feature type="mutagenesis site" description="Changes loop 2 to MazF6 M.tuberculosis sequence; reduces endoribonuclease activity, alters cleavage sites." evidence="20">
    <original>TQSKGYPFE</original>
    <variation>SNTALAAMPGN</variation>
    <location>
        <begin position="53"/>
        <end position="61"/>
    </location>
</feature>
<feature type="strand" evidence="32">
    <location>
        <begin position="11"/>
        <end position="15"/>
    </location>
</feature>
<feature type="turn" evidence="32">
    <location>
        <begin position="19"/>
        <end position="22"/>
    </location>
</feature>
<feature type="strand" evidence="32">
    <location>
        <begin position="29"/>
        <end position="33"/>
    </location>
</feature>
<feature type="helix" evidence="32">
    <location>
        <begin position="37"/>
        <end position="43"/>
    </location>
</feature>
<feature type="strand" evidence="32">
    <location>
        <begin position="46"/>
        <end position="53"/>
    </location>
</feature>
<feature type="strand" evidence="32">
    <location>
        <begin position="61"/>
        <end position="63"/>
    </location>
</feature>
<feature type="strand" evidence="31">
    <location>
        <begin position="66"/>
        <end position="69"/>
    </location>
</feature>
<feature type="strand" evidence="32">
    <location>
        <begin position="72"/>
        <end position="74"/>
    </location>
</feature>
<feature type="helix" evidence="32">
    <location>
        <begin position="75"/>
        <end position="77"/>
    </location>
</feature>
<feature type="strand" evidence="32">
    <location>
        <begin position="79"/>
        <end position="81"/>
    </location>
</feature>
<feature type="helix" evidence="32">
    <location>
        <begin position="83"/>
        <end position="86"/>
    </location>
</feature>
<feature type="strand" evidence="32">
    <location>
        <begin position="89"/>
        <end position="93"/>
    </location>
</feature>
<feature type="helix" evidence="32">
    <location>
        <begin position="96"/>
        <end position="110"/>
    </location>
</feature>
<accession>P0AE70</accession>
<accession>P33645</accession>
<accession>Q2MA50</accession>
<protein>
    <recommendedName>
        <fullName>Endoribonuclease toxin MazF</fullName>
        <ecNumber evidence="7">3.1.27.-</ecNumber>
    </recommendedName>
    <alternativeName>
        <fullName>Toxin MazF</fullName>
    </alternativeName>
    <alternativeName>
        <fullName evidence="28">mRNA interferase MazF</fullName>
    </alternativeName>
</protein>
<comment type="function">
    <text evidence="1 2 5 7 13 14 18 20 22 24 27">Toxic component of a type II toxin-antitoxin (TA) system. A sequence-specific endoribonuclease it inhibits protein synthesis by cleaving mRNA and inducing bacterial stasis. It is stable, single-strand specific with mRNA cleavage independent of the ribosome, although translation enhances cleavage for some mRNAs (PubMed:18854355). Cleavage occurs at the 5'-end of ACA sequences, yielding a 2',3'-cyclic phosphate and a free 5'-OH, although cleavage can also occur on the 3'-end of the first A (PubMed:15537630, PubMed:23280569). Digests 16S rRNA in vivo 43 nts upstream of the C-terminus; this removes the anti-Shine-Dalgarno sequence forming a mixed population of wild-type and 'stress ribosomes'. Stress ribosomes do not translate leader-containing mRNA but are proficient in translation of leaderless mRNA, which alters the protein expression profile of the cell; MazF produces some leaderless mRNA (PubMed:21944167). The toxic endoribonuclease activity is inhibited by its labile cognate antitoxin MazE. Toxicity results when the levels of MazE decrease in the cell, leading to mRNA degradation. This effect can be rescued by expression of MazE, but after 6 hours in rich medium overexpression of MazF leads to programmed cell death (PubMed:11222603, PubMed:8650219). MazF-mediated cell death occurs following a number of stress conditions in a relA-dependent fashion and only when cells are in log phase; sigma factor S (rpoS) protects stationary phase cells from MazF-killing (PubMed:15150257, PubMed:19251848). Cell growth and viability are not affected when MazF and MazE are coexpressed. Both MazE and MazE-MazF bind to the promoter region of the mazE-mazF operon to inhibit their own transcription. MazE has higher affinity for promoter DNA in the presence of MazF (PubMed:25564525). Cross-talk can occur between different TA systems, ectopic expression of this toxin induces transcription of the relBEF TA system operon with specific cleavage of the mRNA produced (PubMed:23432955).</text>
</comment>
<comment type="function">
    <text evidence="6">Might also serve to protect cells against bacteriophage; in the presence of MazE-MazF fewer P1 phages are produced than in a disrupted strain. For strain K38 most wild-type cells are killed but not by phage lysis; it was suggested that MazE-MazF causes P1 phage exclusion from the bacterial population. This phenomenon is strain dependent.</text>
</comment>
<comment type="function">
    <text evidence="11 12 15 16 17 19 21 23 27">The physiological role of this TA system is debated. Programmed cell death (PCD) occurs when cells are at high density and depends on the presence of MazE-MazF and a quorum sensing pentapeptide, the extracellular death factor (EDF) with sequence Asn-Asn-Trp-Asn-Asn (NNWNN), probably produced from the zwf gene product glucose-6-phosphate 1-dehydrogenase (PubMed:17962566, PubMed:18310334). Cell death governed by the MazE-MazF and DinJ-YafQ TA systems seems to play a role in biofilm formation, while MazE-MazF is also implicated in cell death in liquid media (PubMed:19707553). Implicated in hydroxy radical-mediated cell death induced by hydroxyurea treatment (PubMed:20005847, PubMed:23416055). In conjunction with EDF prevents apoptotic-like death (ALD) in the presence of DNA damaging agents, probably by reducing recA mRNA levels in a non-endonuclease-mediated manner (PubMed:22412352). Other studies (in strains BW25113 and MC4100, the latter makes EDF) demonstrate MazF does not cause PCD but instead bacteriostasis and possibly a dormant state as well as persister cell generation (PubMed:24375411).</text>
</comment>
<comment type="activity regulation">
    <text evidence="25">(Microbial infection) RNA cleavage activity is reduced when ADP-ribosylated.</text>
</comment>
<comment type="activity regulation">
    <text evidence="7 17 21">Inhibited by Mg(2+) (PubMed:15537630). Stimulated in vitro in a concentration-dependent fashion by EDF, which is able to overcome inhibition by cognate antitoxin MazE (PubMed:21419338). The TA system is antagonized by stress response kinase SrkA, but probably not by phosphorylation of MazF (PubMed:23416055).</text>
</comment>
<comment type="subunit">
    <text evidence="1 3 17 24 27">Probably a dimer. Forms a heterohexamer composed of alternating toxin and antitoxin homodimers MazF(2)-MazE(2)-MazF(2). The binding site of MazE and ssRNA or ssDNA are largely overlapping; the presence of only 1 MazE molecule inhibits mRNA endoribonuclease activity. Binds to EDF but not a mutated EDF (NNGNN) (PubMed:21419338).</text>
</comment>
<comment type="induction">
    <text evidence="1 4 9 18 22 26 27">Expressed in exponentially growing cells. Induction has been reported to occur after amino acid starvation in a ppGpp-independent fashion and to be Lon protease-dependent (PubMed:12972253), but also to not occur after amino acid starvation and to be regulated by ppGpp (PubMed:8650219). Also induced in M9 minimal medium and by chloramphenicol treatment (PubMed:21944167). MazE alone and in combination with MazF, represses transcription of the mazE-mazF operon. Fis activates transcription. Part of the relA-mazE-mazF-mazG operon, there is also a second mazE-mazF specific promoter which is negatively autoregulated (PubMed:2844820, PubMed:8650219). Operon induced by ectopic expression of toxin RelE; operon induction by amino acid starvation requires the relBEF operon (PubMed:23432955).</text>
</comment>
<comment type="domain">
    <text evidence="30">Loop 1 (residues 17-28) effects catalytic activity while recognition of the ACA cleavage site is influenced by loop 2 (residues 53-61). Alterations of loop 2 generate new cleavage sites in addition to retaining the original cleavage site.</text>
</comment>
<comment type="PTM">
    <text evidence="25">(Microbial infection) ADP-ribosylated by enterobacteria phage T4.</text>
</comment>
<comment type="disruption phenotype">
    <text evidence="2 4 5 6 15 16 19 21 23 27">Decreased sensitivity to dramatic intracellular increases of ppGpp. Cells missing mazE-mazF survive high temperature, various DNA-damaging agents and H(2)O(2) exposure better than wild-type cells. Cells missing mazE-mazF produce more P1 phage than wild-type cells, while introduction of lysogens into a growing non-lysogenic disruption culture is lethal (PubMed:15316771). Cells missing mazE-mazF show reduced biofilm formation, and survive antibiotic treatment in log phase better than wild-type cells (PubMed:11222603, PubMed:19707553). However lag phase cells disrupted only for mazF had a lower survival rate than wild-type cells (PubMed:24375411). Cells missing mazE-mazF survive hydroxyurea treatment better than wild-type; further disruption of relE-relB and tonB yields even better survival (PubMed:20005847). Cells missing mazE-mazF undergo an apoptotic-like death (ALD) upon DNA damage characterized by membrane depolarization and DNA fragmentation; further disruption of recA prevents membrane depolarization (PubMed:22412352). Unlike the single srkA disruption mutant, a triple srkA-mazE-mazF disruption mutant shows no hyperlethality in the presence of nalidixic acid or UV light, suggesting SrkA has a negative effect on MazF (PubMed:23416055).</text>
</comment>
<comment type="biotechnology">
    <text evidence="8">Can be used to produce large quantities of a single protein if the gene coding for the protein does not contain any ACA codons. Up to 90% of expressed bacterial cellular protein can be the target, which can be produced for up to 4 days. The system also works in eukaryotic cells.</text>
</comment>
<comment type="similarity">
    <text evidence="29">Belongs to the PemK/MazF family.</text>
</comment>
<comment type="caution">
    <text evidence="12">Strain K12 / MG1655 is deficient in both production and response to EDF, unlike strains K12 / MC4100, K12 / W3110 and K12 / K38, all of which make and respond to EDF.</text>
</comment>
<reference key="1">
    <citation type="journal article" date="1988" name="J. Biol. Chem.">
        <title>The nucleotide sequence and characterization of the relA gene of Escherichia coli.</title>
        <authorList>
            <person name="Metzger S."/>
            <person name="Dror I.B."/>
            <person name="Aizenman E."/>
            <person name="Schreiber G."/>
            <person name="Toone M."/>
            <person name="Friesen J.D."/>
            <person name="Cashel M."/>
            <person name="Glaser G."/>
        </authorList>
    </citation>
    <scope>NUCLEOTIDE SEQUENCE [GENOMIC DNA]</scope>
    <scope>OPERON STRUCTURE</scope>
    <source>
        <strain>K12</strain>
    </source>
</reference>
<reference key="2">
    <citation type="journal article" date="1993" name="J. Bacteriol.">
        <title>chpA and chpB, Escherichia coli chromosomal homologs of the pem locus responsible for stable maintenance of plasmid R100.</title>
        <authorList>
            <person name="Masuda Y."/>
            <person name="Miyakawa K."/>
            <person name="Nishimura Y."/>
            <person name="Ohtsubo E."/>
        </authorList>
    </citation>
    <scope>NUCLEOTIDE SEQUENCE [GENOMIC DNA]</scope>
    <source>
        <strain>K12 / MC1000 / ATCC 39531</strain>
    </source>
</reference>
<reference key="3">
    <citation type="journal article" date="1997" name="Science">
        <title>The complete genome sequence of Escherichia coli K-12.</title>
        <authorList>
            <person name="Blattner F.R."/>
            <person name="Plunkett G. III"/>
            <person name="Bloch C.A."/>
            <person name="Perna N.T."/>
            <person name="Burland V."/>
            <person name="Riley M."/>
            <person name="Collado-Vides J."/>
            <person name="Glasner J.D."/>
            <person name="Rode C.K."/>
            <person name="Mayhew G.F."/>
            <person name="Gregor J."/>
            <person name="Davis N.W."/>
            <person name="Kirkpatrick H.A."/>
            <person name="Goeden M.A."/>
            <person name="Rose D.J."/>
            <person name="Mau B."/>
            <person name="Shao Y."/>
        </authorList>
    </citation>
    <scope>NUCLEOTIDE SEQUENCE [LARGE SCALE GENOMIC DNA]</scope>
    <source>
        <strain>K12 / MG1655 / ATCC 47076</strain>
    </source>
</reference>
<reference key="4">
    <citation type="journal article" date="2006" name="Mol. Syst. Biol.">
        <title>Highly accurate genome sequences of Escherichia coli K-12 strains MG1655 and W3110.</title>
        <authorList>
            <person name="Hayashi K."/>
            <person name="Morooka N."/>
            <person name="Yamamoto Y."/>
            <person name="Fujita K."/>
            <person name="Isono K."/>
            <person name="Choi S."/>
            <person name="Ohtsubo E."/>
            <person name="Baba T."/>
            <person name="Wanner B.L."/>
            <person name="Mori H."/>
            <person name="Horiuchi T."/>
        </authorList>
    </citation>
    <scope>NUCLEOTIDE SEQUENCE [LARGE SCALE GENOMIC DNA]</scope>
    <source>
        <strain>K12 / W3110 / ATCC 27325 / DSM 5911</strain>
    </source>
</reference>
<reference key="5">
    <citation type="journal article" date="1996" name="Proc. Natl. Acad. Sci. U.S.A.">
        <title>An Escherichia coli chromosomal 'addiction module' regulated by guanosine 3',5'-bispyrophosphate: a model for programmed bacterial cell death.</title>
        <authorList>
            <person name="Aizenman E."/>
            <person name="Engelberg-Kulka H."/>
            <person name="Glaser G."/>
        </authorList>
    </citation>
    <scope>FUNCTION IN PROGRAMMED CELL DEATH</scope>
    <scope>INTERACTION WITH MAZE</scope>
    <scope>INDUCTION</scope>
    <scope>DISRUPTION PHENOTYPE</scope>
    <scope>OPERON STRUCTURE</scope>
    <source>
        <strain>K12 / MC4100 / ATCC 35695 / DSM 6574</strain>
    </source>
</reference>
<reference key="6">
    <citation type="journal article" date="2001" name="J. Biol. Chem.">
        <title>The regulation of the Escherichia coli mazEF promoter involves an unusual alternating palindrome.</title>
        <authorList>
            <person name="Marianovsky I."/>
            <person name="Aizenman E."/>
            <person name="Engelberg-Kulka H."/>
            <person name="Glaser G."/>
        </authorList>
    </citation>
    <scope>TRANSCRIPTION REGULATION</scope>
    <scope>SUBUNIT</scope>
    <source>
        <strain>K12 / MC4100 / ATCC 35695 / DSM 6574</strain>
    </source>
</reference>
<reference key="7">
    <citation type="journal article" date="2001" name="J. Bacteriol.">
        <title>Programmed cell death in Escherichia coli: some antibiotics can trigger mazEF lethality.</title>
        <authorList>
            <person name="Sat B."/>
            <person name="Hazan R."/>
            <person name="Fisher T."/>
            <person name="Khaner H."/>
            <person name="Glaser G."/>
            <person name="Engelberg-Kulka H."/>
        </authorList>
    </citation>
    <scope>FUNCTION IN CELL DEATH</scope>
    <scope>DISRUPTION PHENOTYPE</scope>
    <source>
        <strain>K12 / MC4100 / ATCC 35695 / DSM 6574</strain>
    </source>
</reference>
<reference key="8">
    <citation type="journal article" date="2002" name="Mol. Microbiol.">
        <title>Rapid induction and reversal of a bacteriostatic condition by controlled expression of toxins and antitoxins.</title>
        <authorList>
            <person name="Pedersen K."/>
            <person name="Christensen S.K."/>
            <person name="Gerdes K."/>
        </authorList>
    </citation>
    <scope>FUNCTION AS A TOXIN</scope>
    <source>
        <strain>K12</strain>
    </source>
</reference>
<reference key="9">
    <citation type="journal article" date="2003" name="J. Mol. Biol.">
        <title>Toxin-antitoxin loci as stress-response-elements: ChpAK/MazF and ChpBK cleave translated RNAs and are counteracted by tmRNA.</title>
        <authorList>
            <person name="Christensen S.K."/>
            <person name="Pedersen K."/>
            <person name="Hansen F.G."/>
            <person name="Gerdes K."/>
        </authorList>
    </citation>
    <scope>RNA CLEAVAGE</scope>
    <scope>INDUCTION</scope>
    <scope>DISRUPTION PHENOTYPE</scope>
    <source>
        <strain>K12 / MG1655 / ATCC 47076</strain>
    </source>
</reference>
<reference key="10">
    <citation type="journal article" date="2004" name="J. Bacteriol.">
        <title>Escherichia coli mazEF-mediated cell death is triggered by various stressful conditions.</title>
        <authorList>
            <person name="Hazan R."/>
            <person name="Sat B."/>
            <person name="Engelberg-Kulka H."/>
        </authorList>
    </citation>
    <scope>DISRUPTION PHENOTYPE</scope>
    <scope>FUNCTION IN STRESS RESPONSE</scope>
    <scope>DEPENDENCE ON RELA</scope>
    <source>
        <strain>K12 / K38 / S26</strain>
        <strain>K12 / MC4100 / ATCC 35695 / DSM 6574</strain>
    </source>
</reference>
<reference key="11">
    <citation type="journal article" date="2004" name="J. Bacteriol.">
        <title>MazF-mediated cell death in Escherichia coli: a point of no return.</title>
        <authorList>
            <person name="Amitai S."/>
            <person name="Yassin Y."/>
            <person name="Engelberg-Kulka H."/>
        </authorList>
    </citation>
    <scope>FUNCTION IN PROGRAMMED CELL DEATH</scope>
    <source>
        <strain>K12 / MC4100 / ATCC 35695 / DSM 6574</strain>
    </source>
</reference>
<reference key="12">
    <citation type="journal article" date="2004" name="Mol. Genet. Genomics">
        <title>Escherichia coli mazEF-mediated cell death as a defense mechanism that inhibits the spread of phage P1.</title>
        <authorList>
            <person name="Hazan R."/>
            <person name="Engelberg-Kulka H."/>
        </authorList>
    </citation>
    <scope>FUNCTION</scope>
    <scope>DISRUPTION PHENOTYPE</scope>
    <source>
        <strain>K12 / JM109 / ATCC 53323</strain>
        <strain>K12 / K38 / S26</strain>
        <strain>K12 / MC4100 / ATCC 35695 / DSM 6574</strain>
    </source>
</reference>
<reference key="13">
    <citation type="journal article" date="2005" name="J. Biol. Chem.">
        <title>Insights into the mRNA cleavage mechanism by MazF, an mRNA interferase.</title>
        <authorList>
            <person name="Zhang Y."/>
            <person name="Zhang J."/>
            <person name="Hara H."/>
            <person name="Kato I."/>
            <person name="Inouye M."/>
        </authorList>
    </citation>
    <scope>FUNCTION AS AN ENDONUCLEASE</scope>
    <scope>ACTIVITY REGULATION</scope>
    <scope>SUBSTRATE SPECIFICITY</scope>
    <scope>RNA-BINDING</scope>
</reference>
<reference key="14">
    <citation type="journal article" date="2005" name="Mol. Cell">
        <title>Single protein production in living cells facilitated by an mRNA interferase.</title>
        <authorList>
            <person name="Suzuki M."/>
            <person name="Zhang J."/>
            <person name="Liu M."/>
            <person name="Woychik N.A."/>
            <person name="Inouye M."/>
        </authorList>
    </citation>
    <scope>BIOTECHNOLOGY</scope>
</reference>
<reference key="15">
    <citation type="journal article" date="2006" name="Mol. Microbiol.">
        <title>MazG -- a regulator of programmed cell death in Escherichia coli.</title>
        <authorList>
            <person name="Gross M."/>
            <person name="Marianovsky I."/>
            <person name="Glaser G."/>
        </authorList>
    </citation>
    <scope>INDUCTION</scope>
    <scope>OPERON STRUCTURE</scope>
    <source>
        <strain>K12 / MC4100 / ATCC 35695 / DSM 6574</strain>
        <strain>K12 / W3110 / ATCC 27325 / DSM 5911</strain>
    </source>
</reference>
<reference key="16">
    <citation type="journal article" date="2007" name="Science">
        <title>A linear pentapeptide is a quorum-sensing factor required for mazEF-mediated cell death in Escherichia coli.</title>
        <authorList>
            <person name="Kolodkin-Gal I."/>
            <person name="Hazan R."/>
            <person name="Gaathon A."/>
            <person name="Carmeli S."/>
            <person name="Engelberg-Kulka H."/>
        </authorList>
    </citation>
    <scope>REQUIREMENT FOR EXTRACELLULAR DEATH FACTOR (EDF)</scope>
    <source>
        <strain>K12 / MC4100 / ATCC 35695 / DSM 6574</strain>
    </source>
</reference>
<reference key="17">
    <citation type="journal article" date="2008" name="J. Bacteriol.">
        <title>The extracellular death factor: physiological and genetic factors influencing its production and response in Escherichia coli.</title>
        <authorList>
            <person name="Kolodkin-Gal I."/>
            <person name="Engelberg-Kulka H."/>
        </authorList>
    </citation>
    <scope>EDF PRODUCTION</scope>
    <scope>STRAIN DIFFERENCES IN ABILITY TO MAKE AND RESPOND TO EDF</scope>
    <source>
        <strain>K12 / K38 / S26</strain>
        <strain>K12 / MC4100 / ATCC 35695 / DSM 6574</strain>
        <strain>K12 / MG1655 / ATCC 47076</strain>
        <strain>K12 / W3110 / ATCC 27325 / DSM 5911</strain>
    </source>
</reference>
<reference key="18">
    <citation type="journal article" date="2008" name="Nucleic Acids Res.">
        <title>Translation affects YoeB and MazF messenger RNA interferase activities by different mechanisms.</title>
        <authorList>
            <person name="Christensen-Dalsgaard M."/>
            <person name="Gerdes K."/>
        </authorList>
    </citation>
    <scope>TRANSLATION IMPROVES CLEAVAGE EFFICIENCY</scope>
    <source>
        <strain>K12</strain>
    </source>
</reference>
<reference key="19">
    <citation type="journal article" date="2009" name="J. Bacteriol.">
        <title>The stationary-phase sigma factor sigma(S) is responsible for the resistance of Escherichia coli stationary-phase cells to mazEF-mediated cell death.</title>
        <authorList>
            <person name="Kolodkin-Gal I."/>
            <person name="Engelberg-Kulka H."/>
        </authorList>
    </citation>
    <scope>FUNCTION</scope>
    <source>
        <strain>K12 / MC4100 / ATCC 35695 / DSM 6574</strain>
    </source>
</reference>
<reference key="20">
    <citation type="journal article" date="2009" name="PLoS ONE">
        <title>A differential effect of E. coli toxin-antitoxin systems on cell death in liquid media and biofilm formation.</title>
        <authorList>
            <person name="Kolodkin-Gal I."/>
            <person name="Verdiger R."/>
            <person name="Shlosberg-Fedida A."/>
            <person name="Engelberg-Kulka H."/>
        </authorList>
    </citation>
    <scope>FUNCTION IN CELL DEATH</scope>
    <scope>FUNCTION IN BIOFILM FORMATION</scope>
    <scope>DISRUPTION PHENOTYPE</scope>
    <source>
        <strain>K12 / MC4100 / ATCC 35695 / DSM 6574</strain>
    </source>
</reference>
<reference key="21">
    <citation type="journal article" date="2011" name="Cell">
        <title>Selective translation of leaderless mRNAs by specialized ribosomes generated by MazF in Escherichia coli.</title>
        <authorList>
            <person name="Vesper O."/>
            <person name="Amitai S."/>
            <person name="Belitsky M."/>
            <person name="Byrgazov K."/>
            <person name="Kaberdina A.C."/>
            <person name="Engelberg-Kulka H."/>
            <person name="Moll I."/>
        </authorList>
    </citation>
    <scope>FUNCTION</scope>
    <scope>SUBSTRATE SPECIFICITY</scope>
    <scope>TRANSLATION REGULATION</scope>
    <source>
        <strain>K12 / MC4100 / ATCC 35695 / DSM 6574</strain>
    </source>
</reference>
<reference key="22">
    <citation type="journal article" date="2011" name="Mol. Cell">
        <title>The Escherichia coli extracellular death factor EDF induces the endoribonucleolytic activities of the toxins MazF and ChpBK.</title>
        <authorList>
            <person name="Belitsky M."/>
            <person name="Avshalom H."/>
            <person name="Erental A."/>
            <person name="Yelin I."/>
            <person name="Kumar S."/>
            <person name="London N."/>
            <person name="Sperber M."/>
            <person name="Schueler-Furman O."/>
            <person name="Engelberg-Kulka H."/>
        </authorList>
    </citation>
    <scope>FUNCTION</scope>
    <scope>ACTIVITY REGULATION</scope>
    <scope>INTERACTION WITH EDF</scope>
    <scope>SUBUNIT</scope>
</reference>
<reference key="23">
    <citation type="journal article" date="2011" name="Proc. Natl. Acad. Sci. U.S.A.">
        <title>Bacterial persistence by RNA endonucleases.</title>
        <authorList>
            <person name="Maisonneuve E."/>
            <person name="Shakespeare L.J."/>
            <person name="Joergensen M.G."/>
            <person name="Gerdes K."/>
        </authorList>
    </citation>
    <scope>RETRACTED PAPER</scope>
    <source>
        <strain>K12 / MG1655 / ATCC 47076</strain>
    </source>
</reference>
<reference key="24">
    <citation type="journal article" date="2018" name="Proc. Natl. Acad. Sci. U.S.A.">
        <authorList>
            <person name="Maisonneuve E."/>
            <person name="Shakespeare L.J."/>
            <person name="Joergensen M.G."/>
            <person name="Gerdes K."/>
        </authorList>
    </citation>
    <scope>RETRACTION NOTICE OF PUBMED:21788497</scope>
</reference>
<reference key="25">
    <citation type="journal article" date="2009" name="Mol. Cell">
        <title>Hydroxyurea induces hydroxyl radical-mediated cell death in Escherichia coli.</title>
        <authorList>
            <person name="Davies B.W."/>
            <person name="Kohanski M.A."/>
            <person name="Simmons L.A."/>
            <person name="Winkler J.A."/>
            <person name="Collins J.J."/>
            <person name="Walker G.C."/>
        </authorList>
    </citation>
    <scope>FUNCTION</scope>
    <scope>DISRUPTION PHENOTYPE</scope>
    <source>
        <strain>K12 / MC4100 / ATCC 35695 / DSM 6574</strain>
    </source>
</reference>
<reference key="26">
    <citation type="journal article" date="2012" name="PLoS Biol.">
        <title>Two programmed cell death systems in Escherichia coli: an apoptotic-like death is inhibited by the mazEF-mediated death pathway.</title>
        <authorList>
            <person name="Erental A."/>
            <person name="Sharon I."/>
            <person name="Engelberg-Kulka H."/>
        </authorList>
    </citation>
    <scope>FUNCTION</scope>
    <scope>DISRUPTION PHENOTYPE</scope>
    <source>
        <strain>K12 / MC4100 / ATCC 35695 / DSM 6574</strain>
    </source>
</reference>
<reference key="27">
    <citation type="journal article" date="2013" name="BMC Microbiol.">
        <title>Transcriptional cross-activation between toxin-antitoxin systems of Escherichia coli.</title>
        <authorList>
            <person name="Kasari V."/>
            <person name="Mets T."/>
            <person name="Tenson T."/>
            <person name="Kaldalu N."/>
        </authorList>
    </citation>
    <scope>FUNCTION</scope>
    <scope>INDUCTION BY OTHER TA SYSTEMS</scope>
    <source>
        <strain>K12 / BW25113</strain>
    </source>
</reference>
<reference key="28">
    <citation type="journal article" date="2013" name="Cell Rep.">
        <title>YihE kinase is a central regulator of programmed cell death in bacteria.</title>
        <authorList>
            <person name="Dorsey-Oresto A."/>
            <person name="Lu T."/>
            <person name="Mosel M."/>
            <person name="Wang X."/>
            <person name="Salz T."/>
            <person name="Drlica K."/>
            <person name="Zhao X."/>
        </authorList>
    </citation>
    <scope>FUNCTION</scope>
    <scope>ACTIVITY REGULATION</scope>
    <scope>DISRUPTION PHENOTYPE</scope>
    <source>
        <strain>K12 / MG1655 / ATCC 47076</strain>
    </source>
</reference>
<reference key="29">
    <citation type="journal article" date="2013" name="Proteins">
        <title>ACA-specific RNA sequence recognition is acquired via the loop 2 region of MazF mRNA interferase.</title>
        <authorList>
            <person name="Park J.H."/>
            <person name="Yoshizumi S."/>
            <person name="Yamaguchi Y."/>
            <person name="Wu K.P."/>
            <person name="Inouye M."/>
        </authorList>
    </citation>
    <scope>FUNCTION</scope>
    <scope>SUBSTRATE SPECIFICITY</scope>
    <scope>DOMAIN</scope>
    <scope>MUTAGENESIS OF 17-PHE--HIS-28 AND 53-THR--GLU-61</scope>
    <source>
        <strain>K12 / BW25113</strain>
    </source>
</reference>
<reference key="30">
    <citation type="journal article" date="2014" name="J. Biol. Chem.">
        <title>MazF-induced growth inhibition and persister generation in Escherichia coli.</title>
        <authorList>
            <person name="Tripathi A."/>
            <person name="Dewan P.C."/>
            <person name="Siddique S.A."/>
            <person name="Varadarajan R."/>
        </authorList>
    </citation>
    <scope>FUNCTION IN PERSISTENCE</scope>
    <scope>DISRUPTION PHENOTYPE</scope>
    <scope>MUTAGENESIS OF GLU-24 AND HIS-28</scope>
    <source>
        <strain>K12 / BW25113</strain>
        <strain>K12 / MC4100 / ATCC 35695 / DSM 6574</strain>
    </source>
</reference>
<reference key="31">
    <citation type="journal article" date="2015" name="Nucleic Acids Res.">
        <title>Escherichia coli antitoxin MazE as transcription factor: insights into MazE-DNA binding.</title>
        <authorList>
            <person name="Zorzini V."/>
            <person name="Buts L."/>
            <person name="Schrank E."/>
            <person name="Sterckx Y.G."/>
            <person name="Respondek M."/>
            <person name="Engelberg-Kulka H."/>
            <person name="Loris R."/>
            <person name="Zangger K."/>
            <person name="van Nuland N.A."/>
        </authorList>
    </citation>
    <scope>FUNCTION IN TRANSCRIPTION</scope>
    <scope>SUBUNIT</scope>
</reference>
<reference key="32">
    <citation type="journal article" date="2009" name="Prog. Mol. Biol. Transl. Sci.">
        <title>mRNA interferases, sequence-specific endoribonucleases from the toxin-antitoxin systems.</title>
        <authorList>
            <person name="Yamaguchi Y."/>
            <person name="Inouye M."/>
        </authorList>
    </citation>
    <scope>REVIEW</scope>
</reference>
<reference key="33">
    <citation type="journal article" date="2016" name="Mol. Microbiol.">
        <title>An ADP-ribosyltransferase Alt of bacteriophage T4 negatively regulates the Escherichia coli MazF toxin of a toxin-antitoxin module.</title>
        <authorList>
            <person name="Alawneh A.M."/>
            <person name="Qi D."/>
            <person name="Yonesaki T."/>
            <person name="Otsuka Y."/>
        </authorList>
    </citation>
    <scope>ACTIVITY REGULATION (MICROBIAL INFECTION)</scope>
    <scope>ADP-RIBOSYLATION AT ARG-4 (MICROBIAL INFECTION)</scope>
</reference>
<reference key="34">
    <citation type="journal article" date="2003" name="Mol. Cell">
        <title>Crystal structure of the MazE/MazF complex: molecular bases of antidote-toxin recognition.</title>
        <authorList>
            <person name="Kamada K."/>
            <person name="Hanaoka F."/>
            <person name="Burley S.K."/>
        </authorList>
    </citation>
    <scope>X-RAY CRYSTALLOGRAPHY (1.7 ANGSTROMS) OF 2-111</scope>
    <scope>POSSIBLE DNA-BINDING</scope>
    <scope>SUBUNIT</scope>
</reference>
<reference key="35">
    <citation type="journal article" date="2006" name="J. Mol. Biol.">
        <title>Characterization of dual substrate binding sites in the homodimeric structure of Escherichia coli mRNA interferase MazF.</title>
        <authorList>
            <person name="Li G.Y."/>
            <person name="Zhang Y."/>
            <person name="Chan M.C."/>
            <person name="Mal T.K."/>
            <person name="Hoeflich K.P."/>
            <person name="Inouye M."/>
            <person name="Ikura M."/>
        </authorList>
    </citation>
    <scope>STRUCTURE BY NMR</scope>
    <scope>MUTAGENESIS OF GLU-24</scope>
</reference>
<reference key="36">
    <citation type="submission" date="2010-06" db="PDB data bank">
        <title>Biochemical and structural analysis of E. coli MazF toxin.</title>
        <authorList>
            <person name="Wang X."/>
            <person name="Wang K."/>
            <person name="Gao X."/>
            <person name="Zhang X."/>
            <person name="Li L."/>
            <person name="Su X."/>
            <person name="Zhang J."/>
        </authorList>
    </citation>
    <scope>X-RAY CRYSTALLOGRAPHY (2.00 ANGSTROMS)</scope>
</reference>
<sequence>MVSRYVPDMGDLIWVDFDPTKGSEQAGHRPAVVLSPFMYNNKTGMCLCVPCTTQSKGYPFEVVLSGQERDGVALADQVKSIAWRARGATKKGTVAPEELQLIKAKINVLIG</sequence>
<dbReference type="EC" id="3.1.27.-" evidence="7"/>
<dbReference type="EMBL" id="D16450">
    <property type="protein sequence ID" value="BAA03918.1"/>
    <property type="molecule type" value="Genomic_DNA"/>
</dbReference>
<dbReference type="EMBL" id="J04039">
    <property type="protein sequence ID" value="AAA03239.1"/>
    <property type="molecule type" value="Unassigned_DNA"/>
</dbReference>
<dbReference type="EMBL" id="U29580">
    <property type="protein sequence ID" value="AAA69292.1"/>
    <property type="molecule type" value="Genomic_DNA"/>
</dbReference>
<dbReference type="EMBL" id="U00096">
    <property type="protein sequence ID" value="AAC75824.1"/>
    <property type="molecule type" value="Genomic_DNA"/>
</dbReference>
<dbReference type="EMBL" id="AP009048">
    <property type="protein sequence ID" value="BAE76856.1"/>
    <property type="molecule type" value="Genomic_DNA"/>
</dbReference>
<dbReference type="PIR" id="B49339">
    <property type="entry name" value="B49339"/>
</dbReference>
<dbReference type="RefSeq" id="NP_417262.1">
    <property type="nucleotide sequence ID" value="NC_000913.3"/>
</dbReference>
<dbReference type="RefSeq" id="WP_000254738.1">
    <property type="nucleotide sequence ID" value="NZ_STEB01000030.1"/>
</dbReference>
<dbReference type="PDB" id="1UB4">
    <property type="method" value="X-ray"/>
    <property type="resolution" value="1.70 A"/>
    <property type="chains" value="A/B=2-111"/>
</dbReference>
<dbReference type="PDB" id="3NFC">
    <property type="method" value="X-ray"/>
    <property type="resolution" value="2.00 A"/>
    <property type="chains" value="A/B/C/D/E/F=1-111"/>
</dbReference>
<dbReference type="PDB" id="5CK9">
    <property type="method" value="X-ray"/>
    <property type="resolution" value="1.90 A"/>
    <property type="chains" value="A/B=1-111"/>
</dbReference>
<dbReference type="PDB" id="5CKB">
    <property type="method" value="X-ray"/>
    <property type="resolution" value="2.80 A"/>
    <property type="chains" value="A/B=1-111"/>
</dbReference>
<dbReference type="PDB" id="5CKD">
    <property type="method" value="X-ray"/>
    <property type="resolution" value="1.70 A"/>
    <property type="chains" value="A/B=1-111"/>
</dbReference>
<dbReference type="PDB" id="5CKE">
    <property type="method" value="X-ray"/>
    <property type="resolution" value="2.31 A"/>
    <property type="chains" value="A/B=1-111"/>
</dbReference>
<dbReference type="PDB" id="5CKF">
    <property type="method" value="X-ray"/>
    <property type="resolution" value="2.80 A"/>
    <property type="chains" value="A/B=1-111"/>
</dbReference>
<dbReference type="PDB" id="5CKH">
    <property type="method" value="X-ray"/>
    <property type="resolution" value="2.45 A"/>
    <property type="chains" value="A/B=1-111"/>
</dbReference>
<dbReference type="PDB" id="5CO7">
    <property type="method" value="X-ray"/>
    <property type="resolution" value="3.49 A"/>
    <property type="chains" value="A/B/C/D/E/F=1-111"/>
</dbReference>
<dbReference type="PDB" id="5CQX">
    <property type="method" value="X-ray"/>
    <property type="resolution" value="1.63 A"/>
    <property type="chains" value="A/B=1-111"/>
</dbReference>
<dbReference type="PDB" id="5CQY">
    <property type="method" value="X-ray"/>
    <property type="resolution" value="2.48 A"/>
    <property type="chains" value="A/B=1-111"/>
</dbReference>
<dbReference type="PDB" id="5CR2">
    <property type="method" value="X-ray"/>
    <property type="resolution" value="2.90 A"/>
    <property type="chains" value="A/B/C=1-111"/>
</dbReference>
<dbReference type="PDBsum" id="1UB4"/>
<dbReference type="PDBsum" id="3NFC"/>
<dbReference type="PDBsum" id="5CK9"/>
<dbReference type="PDBsum" id="5CKB"/>
<dbReference type="PDBsum" id="5CKD"/>
<dbReference type="PDBsum" id="5CKE"/>
<dbReference type="PDBsum" id="5CKF"/>
<dbReference type="PDBsum" id="5CKH"/>
<dbReference type="PDBsum" id="5CO7"/>
<dbReference type="PDBsum" id="5CQX"/>
<dbReference type="PDBsum" id="5CQY"/>
<dbReference type="PDBsum" id="5CR2"/>
<dbReference type="BMRB" id="P0AE70"/>
<dbReference type="SMR" id="P0AE70"/>
<dbReference type="BioGRID" id="4262300">
    <property type="interactions" value="15"/>
</dbReference>
<dbReference type="ComplexPortal" id="CPX-1086">
    <property type="entry name" value="MazEF toxin-antitoxin complex"/>
</dbReference>
<dbReference type="FunCoup" id="P0AE70">
    <property type="interactions" value="16"/>
</dbReference>
<dbReference type="IntAct" id="P0AE70">
    <property type="interactions" value="2"/>
</dbReference>
<dbReference type="STRING" id="511145.b2782"/>
<dbReference type="BindingDB" id="P0AE70"/>
<dbReference type="ChEMBL" id="CHEMBL1795096"/>
<dbReference type="jPOST" id="P0AE70"/>
<dbReference type="PaxDb" id="511145-b2782"/>
<dbReference type="EnsemblBacteria" id="AAC75824">
    <property type="protein sequence ID" value="AAC75824"/>
    <property type="gene ID" value="b2782"/>
</dbReference>
<dbReference type="GeneID" id="93779216"/>
<dbReference type="GeneID" id="947252"/>
<dbReference type="KEGG" id="ecj:JW2753"/>
<dbReference type="KEGG" id="eco:b2782"/>
<dbReference type="KEGG" id="ecoc:C3026_15285"/>
<dbReference type="PATRIC" id="fig|1411691.4.peg.3953"/>
<dbReference type="EchoBASE" id="EB1229"/>
<dbReference type="eggNOG" id="COG2337">
    <property type="taxonomic scope" value="Bacteria"/>
</dbReference>
<dbReference type="HOGENOM" id="CLU_121823_2_3_6"/>
<dbReference type="InParanoid" id="P0AE70"/>
<dbReference type="OMA" id="QIKGYPF"/>
<dbReference type="OrthoDB" id="9808744at2"/>
<dbReference type="PhylomeDB" id="P0AE70"/>
<dbReference type="BioCyc" id="EcoCyc:EG11249-MONOMER"/>
<dbReference type="BioCyc" id="MetaCyc:EG11249-MONOMER"/>
<dbReference type="EvolutionaryTrace" id="P0AE70"/>
<dbReference type="PRO" id="PR:P0AE70"/>
<dbReference type="Proteomes" id="UP000000625">
    <property type="component" value="Chromosome"/>
</dbReference>
<dbReference type="GO" id="GO:0032991">
    <property type="term" value="C:protein-containing complex"/>
    <property type="evidence" value="ECO:0000314"/>
    <property type="project" value="CAFA"/>
</dbReference>
<dbReference type="GO" id="GO:0110001">
    <property type="term" value="C:toxin-antitoxin complex"/>
    <property type="evidence" value="ECO:0000353"/>
    <property type="project" value="ComplexPortal"/>
</dbReference>
<dbReference type="GO" id="GO:0003677">
    <property type="term" value="F:DNA binding"/>
    <property type="evidence" value="ECO:0007669"/>
    <property type="project" value="UniProtKB-KW"/>
</dbReference>
<dbReference type="GO" id="GO:0140677">
    <property type="term" value="F:molecular function activator activity"/>
    <property type="evidence" value="ECO:0000269"/>
    <property type="project" value="DisProt"/>
</dbReference>
<dbReference type="GO" id="GO:0042803">
    <property type="term" value="F:protein homodimerization activity"/>
    <property type="evidence" value="ECO:0000314"/>
    <property type="project" value="CAFA"/>
</dbReference>
<dbReference type="GO" id="GO:0044877">
    <property type="term" value="F:protein-containing complex binding"/>
    <property type="evidence" value="ECO:0000314"/>
    <property type="project" value="CAFA"/>
</dbReference>
<dbReference type="GO" id="GO:0003723">
    <property type="term" value="F:RNA binding"/>
    <property type="evidence" value="ECO:0007669"/>
    <property type="project" value="UniProtKB-KW"/>
</dbReference>
<dbReference type="GO" id="GO:0004521">
    <property type="term" value="F:RNA endonuclease activity"/>
    <property type="evidence" value="ECO:0000314"/>
    <property type="project" value="UniProtKB"/>
</dbReference>
<dbReference type="GO" id="GO:0051607">
    <property type="term" value="P:defense response to virus"/>
    <property type="evidence" value="ECO:0007669"/>
    <property type="project" value="UniProtKB-KW"/>
</dbReference>
<dbReference type="GO" id="GO:0006402">
    <property type="term" value="P:mRNA catabolic process"/>
    <property type="evidence" value="ECO:0000314"/>
    <property type="project" value="UniProtKB"/>
</dbReference>
<dbReference type="GO" id="GO:0030308">
    <property type="term" value="P:negative regulation of cell growth"/>
    <property type="evidence" value="ECO:0000315"/>
    <property type="project" value="UniProtKB"/>
</dbReference>
<dbReference type="GO" id="GO:0043068">
    <property type="term" value="P:positive regulation of programmed cell death"/>
    <property type="evidence" value="ECO:0000315"/>
    <property type="project" value="CACAO"/>
</dbReference>
<dbReference type="GO" id="GO:0009372">
    <property type="term" value="P:quorum sensing"/>
    <property type="evidence" value="ECO:0007669"/>
    <property type="project" value="UniProtKB-KW"/>
</dbReference>
<dbReference type="GO" id="GO:0006355">
    <property type="term" value="P:regulation of DNA-templated transcription"/>
    <property type="evidence" value="ECO:0000314"/>
    <property type="project" value="ComplexPortal"/>
</dbReference>
<dbReference type="GO" id="GO:0040008">
    <property type="term" value="P:regulation of growth"/>
    <property type="evidence" value="ECO:0000314"/>
    <property type="project" value="ComplexPortal"/>
</dbReference>
<dbReference type="GO" id="GO:0006417">
    <property type="term" value="P:regulation of translation"/>
    <property type="evidence" value="ECO:0007669"/>
    <property type="project" value="UniProtKB-KW"/>
</dbReference>
<dbReference type="GO" id="GO:0016075">
    <property type="term" value="P:rRNA catabolic process"/>
    <property type="evidence" value="ECO:0000314"/>
    <property type="project" value="UniProtKB"/>
</dbReference>
<dbReference type="GO" id="GO:0044010">
    <property type="term" value="P:single-species biofilm formation"/>
    <property type="evidence" value="ECO:0000314"/>
    <property type="project" value="ComplexPortal"/>
</dbReference>
<dbReference type="DisProt" id="DP00299"/>
<dbReference type="FunFam" id="2.30.30.110:FF:000001">
    <property type="entry name" value="Endoribonuclease toxin MazF"/>
    <property type="match status" value="1"/>
</dbReference>
<dbReference type="Gene3D" id="2.30.30.110">
    <property type="match status" value="1"/>
</dbReference>
<dbReference type="InterPro" id="IPR003477">
    <property type="entry name" value="PemK-like"/>
</dbReference>
<dbReference type="InterPro" id="IPR011067">
    <property type="entry name" value="Plasmid_toxin/cell-grow_inhib"/>
</dbReference>
<dbReference type="NCBIfam" id="NF007386">
    <property type="entry name" value="PRK09907.1"/>
    <property type="match status" value="1"/>
</dbReference>
<dbReference type="PANTHER" id="PTHR33988">
    <property type="entry name" value="ENDORIBONUCLEASE MAZF-RELATED"/>
    <property type="match status" value="1"/>
</dbReference>
<dbReference type="PANTHER" id="PTHR33988:SF3">
    <property type="entry name" value="ENDORIBONUCLEASE TOXIN CHPB-RELATED"/>
    <property type="match status" value="1"/>
</dbReference>
<dbReference type="Pfam" id="PF02452">
    <property type="entry name" value="PemK_toxin"/>
    <property type="match status" value="1"/>
</dbReference>
<dbReference type="SUPFAM" id="SSF50118">
    <property type="entry name" value="Cell growth inhibitor/plasmid maintenance toxic component"/>
    <property type="match status" value="1"/>
</dbReference>
<evidence type="ECO:0000269" key="1">
    <source>
    </source>
</evidence>
<evidence type="ECO:0000269" key="2">
    <source>
    </source>
</evidence>
<evidence type="ECO:0000269" key="3">
    <source>
    </source>
</evidence>
<evidence type="ECO:0000269" key="4">
    <source>
    </source>
</evidence>
<evidence type="ECO:0000269" key="5">
    <source>
    </source>
</evidence>
<evidence type="ECO:0000269" key="6">
    <source>
    </source>
</evidence>
<evidence type="ECO:0000269" key="7">
    <source>
    </source>
</evidence>
<evidence type="ECO:0000269" key="8">
    <source>
    </source>
</evidence>
<evidence type="ECO:0000269" key="9">
    <source>
    </source>
</evidence>
<evidence type="ECO:0000269" key="10">
    <source>
    </source>
</evidence>
<evidence type="ECO:0000269" key="11">
    <source>
    </source>
</evidence>
<evidence type="ECO:0000269" key="12">
    <source>
    </source>
</evidence>
<evidence type="ECO:0000269" key="13">
    <source>
    </source>
</evidence>
<evidence type="ECO:0000269" key="14">
    <source>
    </source>
</evidence>
<evidence type="ECO:0000269" key="15">
    <source>
    </source>
</evidence>
<evidence type="ECO:0000269" key="16">
    <source>
    </source>
</evidence>
<evidence type="ECO:0000269" key="17">
    <source>
    </source>
</evidence>
<evidence type="ECO:0000269" key="18">
    <source>
    </source>
</evidence>
<evidence type="ECO:0000269" key="19">
    <source>
    </source>
</evidence>
<evidence type="ECO:0000269" key="20">
    <source>
    </source>
</evidence>
<evidence type="ECO:0000269" key="21">
    <source>
    </source>
</evidence>
<evidence type="ECO:0000269" key="22">
    <source>
    </source>
</evidence>
<evidence type="ECO:0000269" key="23">
    <source>
    </source>
</evidence>
<evidence type="ECO:0000269" key="24">
    <source>
    </source>
</evidence>
<evidence type="ECO:0000269" key="25">
    <source>
    </source>
</evidence>
<evidence type="ECO:0000269" key="26">
    <source>
    </source>
</evidence>
<evidence type="ECO:0000269" key="27">
    <source>
    </source>
</evidence>
<evidence type="ECO:0000303" key="28">
    <source>
    </source>
</evidence>
<evidence type="ECO:0000305" key="29"/>
<evidence type="ECO:0000305" key="30">
    <source>
    </source>
</evidence>
<evidence type="ECO:0007829" key="31">
    <source>
        <dbReference type="PDB" id="5CKD"/>
    </source>
</evidence>
<evidence type="ECO:0007829" key="32">
    <source>
        <dbReference type="PDB" id="5CQX"/>
    </source>
</evidence>
<name>MAZF_ECOLI</name>
<gene>
    <name type="primary">mazF</name>
    <name type="synonym">chpA</name>
    <name type="synonym">chpAK</name>
    <name type="ordered locus">b2782</name>
    <name type="ordered locus">JW2753</name>
</gene>
<keyword id="KW-0002">3D-structure</keyword>
<keyword id="KW-0013">ADP-ribosylation</keyword>
<keyword id="KW-0051">Antiviral defense</keyword>
<keyword id="KW-0238">DNA-binding</keyword>
<keyword id="KW-0255">Endonuclease</keyword>
<keyword id="KW-0378">Hydrolase</keyword>
<keyword id="KW-0540">Nuclease</keyword>
<keyword id="KW-0673">Quorum sensing</keyword>
<keyword id="KW-1185">Reference proteome</keyword>
<keyword id="KW-0678">Repressor</keyword>
<keyword id="KW-0694">RNA-binding</keyword>
<keyword id="KW-0346">Stress response</keyword>
<keyword id="KW-1277">Toxin-antitoxin system</keyword>
<keyword id="KW-0804">Transcription</keyword>
<keyword id="KW-0805">Transcription regulation</keyword>
<keyword id="KW-0810">Translation regulation</keyword>